<proteinExistence type="evidence at protein level"/>
<gene>
    <name evidence="2" type="primary">NAPG</name>
    <name evidence="2" type="synonym">SNAPG</name>
</gene>
<accession>P81127</accession>
<accession>Q29RL7</accession>
<sequence length="312" mass="34636">MAAQKINEGLEHLAKAEKYLKTGFLKWKPDYDSAASEYGKAAVAFKNAKQFEQAKDACLKEAVAHENNRALFHAAKAYEQAGMMLKEMQKLPEAVQLIEKASMMYLENGTPDTAAMALERAGKLIENVDPEKAVQLYQQTANVFENEERLRQAVELLGKASRLLVRGRRFDEAAISIQKEKNIYKEIENYPTCYKKTIAQVLVHLHRNDYVAAERCVRESYSIPGFNGSEDCAALEQLLEGYDQQDQDQVAEVCNSPLFKYMDNDYAKLGLSLVVPGGGVKKKAAAPPQAKPEGTAAPAAEEEEDEYAGGLC</sequence>
<evidence type="ECO:0000250" key="1">
    <source>
        <dbReference type="UniProtKB" id="Q99747"/>
    </source>
</evidence>
<evidence type="ECO:0000250" key="2">
    <source>
        <dbReference type="UniProtKB" id="Q9CWZ7"/>
    </source>
</evidence>
<evidence type="ECO:0000256" key="3">
    <source>
        <dbReference type="SAM" id="MobiDB-lite"/>
    </source>
</evidence>
<evidence type="ECO:0000269" key="4">
    <source>
    </source>
</evidence>
<evidence type="ECO:0000305" key="5"/>
<feature type="chain" id="PRO_0000219062" description="Gamma-soluble NSF attachment protein">
    <location>
        <begin position="1"/>
        <end position="312"/>
    </location>
</feature>
<feature type="region of interest" description="Disordered" evidence="3">
    <location>
        <begin position="281"/>
        <end position="312"/>
    </location>
</feature>
<feature type="compositionally biased region" description="Low complexity" evidence="3">
    <location>
        <begin position="285"/>
        <end position="299"/>
    </location>
</feature>
<feature type="compositionally biased region" description="Acidic residues" evidence="3">
    <location>
        <begin position="300"/>
        <end position="312"/>
    </location>
</feature>
<feature type="sequence conflict" description="In Ref. 1; AA sequence." evidence="5" ref="1">
    <original>E</original>
    <variation>R</variation>
    <location>
        <position position="214"/>
    </location>
</feature>
<feature type="sequence conflict" description="In Ref. 2; AAI14120." evidence="5" ref="2">
    <original>E</original>
    <variation>G</variation>
    <location>
        <position position="303"/>
    </location>
</feature>
<name>SNAG_BOVIN</name>
<keyword id="KW-0903">Direct protein sequencing</keyword>
<keyword id="KW-0931">ER-Golgi transport</keyword>
<keyword id="KW-0333">Golgi apparatus</keyword>
<keyword id="KW-0472">Membrane</keyword>
<keyword id="KW-0653">Protein transport</keyword>
<keyword id="KW-1185">Reference proteome</keyword>
<keyword id="KW-0813">Transport</keyword>
<comment type="function">
    <text>Required for vesicular transport between the endoplasmic reticulum and the Golgi apparatus.</text>
</comment>
<comment type="subunit">
    <text evidence="1 2">Interacts with RAB11FIP5 (By similarity). Interacts with VTI1A (By similarity).</text>
</comment>
<comment type="subcellular location">
    <subcellularLocation>
        <location evidence="4">Membrane</location>
        <topology evidence="4">Peripheral membrane protein</topology>
    </subcellularLocation>
    <subcellularLocation>
        <location evidence="2">Golgi apparatus</location>
    </subcellularLocation>
</comment>
<comment type="similarity">
    <text evidence="5">Belongs to the SNAP family.</text>
</comment>
<protein>
    <recommendedName>
        <fullName evidence="1">Gamma-soluble NSF attachment protein</fullName>
        <shortName evidence="1">SNAP-gamma</shortName>
    </recommendedName>
    <alternativeName>
        <fullName evidence="2">N-ethylmaleimide-sensitive factor attachment protein gamma</fullName>
    </alternativeName>
</protein>
<dbReference type="EMBL" id="BC114119">
    <property type="protein sequence ID" value="AAI14120.1"/>
    <property type="molecule type" value="mRNA"/>
</dbReference>
<dbReference type="RefSeq" id="NP_001039487.1">
    <property type="nucleotide sequence ID" value="NM_001046022.2"/>
</dbReference>
<dbReference type="SMR" id="P81127"/>
<dbReference type="FunCoup" id="P81127">
    <property type="interactions" value="3116"/>
</dbReference>
<dbReference type="STRING" id="9913.ENSBTAP00000065698"/>
<dbReference type="PaxDb" id="9913-ENSBTAP00000006800"/>
<dbReference type="GeneID" id="509041"/>
<dbReference type="KEGG" id="bta:509041"/>
<dbReference type="CTD" id="8774"/>
<dbReference type="eggNOG" id="KOG1585">
    <property type="taxonomic scope" value="Eukaryota"/>
</dbReference>
<dbReference type="HOGENOM" id="CLU_063974_1_0_1"/>
<dbReference type="InParanoid" id="P81127"/>
<dbReference type="OrthoDB" id="26569at2759"/>
<dbReference type="TreeFam" id="TF312872"/>
<dbReference type="Proteomes" id="UP000009136">
    <property type="component" value="Unplaced"/>
</dbReference>
<dbReference type="GO" id="GO:0005794">
    <property type="term" value="C:Golgi apparatus"/>
    <property type="evidence" value="ECO:0007669"/>
    <property type="project" value="UniProtKB-SubCell"/>
</dbReference>
<dbReference type="GO" id="GO:0031201">
    <property type="term" value="C:SNARE complex"/>
    <property type="evidence" value="ECO:0000318"/>
    <property type="project" value="GO_Central"/>
</dbReference>
<dbReference type="GO" id="GO:0005483">
    <property type="term" value="F:soluble NSF attachment protein activity"/>
    <property type="evidence" value="ECO:0000318"/>
    <property type="project" value="GO_Central"/>
</dbReference>
<dbReference type="GO" id="GO:0019905">
    <property type="term" value="F:syntaxin binding"/>
    <property type="evidence" value="ECO:0000318"/>
    <property type="project" value="GO_Central"/>
</dbReference>
<dbReference type="GO" id="GO:0006886">
    <property type="term" value="P:intracellular protein transport"/>
    <property type="evidence" value="ECO:0000318"/>
    <property type="project" value="GO_Central"/>
</dbReference>
<dbReference type="GO" id="GO:0016192">
    <property type="term" value="P:vesicle-mediated transport"/>
    <property type="evidence" value="ECO:0007669"/>
    <property type="project" value="UniProtKB-KW"/>
</dbReference>
<dbReference type="CDD" id="cd15832">
    <property type="entry name" value="SNAP"/>
    <property type="match status" value="1"/>
</dbReference>
<dbReference type="FunFam" id="1.25.40.10:FF:000115">
    <property type="entry name" value="Gamma-soluble NSF attachment protein"/>
    <property type="match status" value="1"/>
</dbReference>
<dbReference type="Gene3D" id="1.25.40.10">
    <property type="entry name" value="Tetratricopeptide repeat domain"/>
    <property type="match status" value="1"/>
</dbReference>
<dbReference type="InterPro" id="IPR000744">
    <property type="entry name" value="NSF_attach"/>
</dbReference>
<dbReference type="InterPro" id="IPR011990">
    <property type="entry name" value="TPR-like_helical_dom_sf"/>
</dbReference>
<dbReference type="PANTHER" id="PTHR13768:SF2">
    <property type="entry name" value="GAMMA-SOLUBLE NSF ATTACHMENT PROTEIN"/>
    <property type="match status" value="1"/>
</dbReference>
<dbReference type="PANTHER" id="PTHR13768">
    <property type="entry name" value="SOLUBLE NSF ATTACHMENT PROTEIN SNAP"/>
    <property type="match status" value="1"/>
</dbReference>
<dbReference type="Pfam" id="PF14938">
    <property type="entry name" value="SNAP"/>
    <property type="match status" value="1"/>
</dbReference>
<dbReference type="SUPFAM" id="SSF48452">
    <property type="entry name" value="TPR-like"/>
    <property type="match status" value="1"/>
</dbReference>
<organism>
    <name type="scientific">Bos taurus</name>
    <name type="common">Bovine</name>
    <dbReference type="NCBI Taxonomy" id="9913"/>
    <lineage>
        <taxon>Eukaryota</taxon>
        <taxon>Metazoa</taxon>
        <taxon>Chordata</taxon>
        <taxon>Craniata</taxon>
        <taxon>Vertebrata</taxon>
        <taxon>Euteleostomi</taxon>
        <taxon>Mammalia</taxon>
        <taxon>Eutheria</taxon>
        <taxon>Laurasiatheria</taxon>
        <taxon>Artiodactyla</taxon>
        <taxon>Ruminantia</taxon>
        <taxon>Pecora</taxon>
        <taxon>Bovidae</taxon>
        <taxon>Bovinae</taxon>
        <taxon>Bos</taxon>
    </lineage>
</organism>
<reference key="1">
    <citation type="journal article" date="1993" name="Nature">
        <title>SNAP family of NSF attachment proteins includes a brain-specific isoform.</title>
        <authorList>
            <person name="Whiteheart S.W."/>
            <person name="Griff I.C."/>
            <person name="Brunner M."/>
            <person name="Clary D.O."/>
            <person name="Mayer T."/>
            <person name="Buhrow S.A."/>
            <person name="Rothman J.E."/>
        </authorList>
    </citation>
    <scope>NUCLEOTIDE SEQUENCE [MRNA]</scope>
    <scope>PARTIAL PROTEIN SEQUENCE</scope>
    <scope>SUBCELLULAR LOCATION</scope>
    <source>
        <tissue>Brain</tissue>
    </source>
</reference>
<reference key="2">
    <citation type="submission" date="2006-02" db="EMBL/GenBank/DDBJ databases">
        <authorList>
            <consortium name="NIH - Mammalian Gene Collection (MGC) project"/>
        </authorList>
    </citation>
    <scope>NUCLEOTIDE SEQUENCE [LARGE SCALE MRNA]</scope>
    <source>
        <strain>Hereford</strain>
        <tissue>Hypothalamus</tissue>
    </source>
</reference>